<accession>Q14135</accession>
<accession>A0A075B6E4</accession>
<accession>B4DTS7</accession>
<accession>G5E9M7</accession>
<accession>J3KN68</accession>
<accession>Q7L5V0</accession>
<accession>Q9BQ78</accession>
<sequence>METPLDVLSRAASLVHADDEKREAALRGEPRIQTLPVASALSSHRTGPPPISPSKRKFSMEPGDEDLDCDNDHVSKMSRIFNPHLNKTANGDCRRDPRERSRSPIERAVAPTMSLHGSHLYTSLPSLGLEQPLALTKNSLDASRPAGLSPTLTPGERQQNRPSVITCASAGARNCNLSHCPIAHSGCAAPGPASYRRPPSAATTCDPVVEEHFRRSLGKNYKEPEPAPNSVSITGSVDDHFAKALGDTWLQIKAAKDGASSSPESASRRGQPASPSAHMVSHSHSPSVVS</sequence>
<organism>
    <name type="scientific">Homo sapiens</name>
    <name type="common">Human</name>
    <dbReference type="NCBI Taxonomy" id="9606"/>
    <lineage>
        <taxon>Eukaryota</taxon>
        <taxon>Metazoa</taxon>
        <taxon>Chordata</taxon>
        <taxon>Craniata</taxon>
        <taxon>Vertebrata</taxon>
        <taxon>Euteleostomi</taxon>
        <taxon>Mammalia</taxon>
        <taxon>Eutheria</taxon>
        <taxon>Euarchontoglires</taxon>
        <taxon>Primates</taxon>
        <taxon>Haplorrhini</taxon>
        <taxon>Catarrhini</taxon>
        <taxon>Hominidae</taxon>
        <taxon>Homo</taxon>
    </lineage>
</organism>
<proteinExistence type="evidence at protein level"/>
<reference key="1">
    <citation type="journal article" date="1995" name="DNA Res.">
        <title>Prediction of the coding sequences of unidentified human genes. IV. The coding sequences of 40 new genes (KIAA0121-KIAA0160) deduced by analysis of cDNA clones from human cell line KG-1.</title>
        <authorList>
            <person name="Nagase T."/>
            <person name="Seki N."/>
            <person name="Tanaka A."/>
            <person name="Ishikawa K."/>
            <person name="Nomura N."/>
        </authorList>
    </citation>
    <scope>NUCLEOTIDE SEQUENCE [LARGE SCALE MRNA] (ISOFORM 1)</scope>
    <scope>VARIANT MET-32</scope>
    <source>
        <tissue>Bone marrow</tissue>
    </source>
</reference>
<reference key="2">
    <citation type="submission" date="2005-01" db="EMBL/GenBank/DDBJ databases">
        <authorList>
            <person name="Nagase T."/>
            <person name="Seki N."/>
            <person name="Tanaka A."/>
            <person name="Ishikawa K."/>
            <person name="Nomura N."/>
        </authorList>
    </citation>
    <scope>SEQUENCE REVISION TO N-TERMINUS; C-TERMINUS; 32 AND 113</scope>
</reference>
<reference key="3">
    <citation type="journal article" date="2004" name="Nat. Genet.">
        <title>Complete sequencing and characterization of 21,243 full-length human cDNAs.</title>
        <authorList>
            <person name="Ota T."/>
            <person name="Suzuki Y."/>
            <person name="Nishikawa T."/>
            <person name="Otsuki T."/>
            <person name="Sugiyama T."/>
            <person name="Irie R."/>
            <person name="Wakamatsu A."/>
            <person name="Hayashi K."/>
            <person name="Sato H."/>
            <person name="Nagai K."/>
            <person name="Kimura K."/>
            <person name="Makita H."/>
            <person name="Sekine M."/>
            <person name="Obayashi M."/>
            <person name="Nishi T."/>
            <person name="Shibahara T."/>
            <person name="Tanaka T."/>
            <person name="Ishii S."/>
            <person name="Yamamoto J."/>
            <person name="Saito K."/>
            <person name="Kawai Y."/>
            <person name="Isono Y."/>
            <person name="Nakamura Y."/>
            <person name="Nagahari K."/>
            <person name="Murakami K."/>
            <person name="Yasuda T."/>
            <person name="Iwayanagi T."/>
            <person name="Wagatsuma M."/>
            <person name="Shiratori A."/>
            <person name="Sudo H."/>
            <person name="Hosoiri T."/>
            <person name="Kaku Y."/>
            <person name="Kodaira H."/>
            <person name="Kondo H."/>
            <person name="Sugawara M."/>
            <person name="Takahashi M."/>
            <person name="Kanda K."/>
            <person name="Yokoi T."/>
            <person name="Furuya T."/>
            <person name="Kikkawa E."/>
            <person name="Omura Y."/>
            <person name="Abe K."/>
            <person name="Kamihara K."/>
            <person name="Katsuta N."/>
            <person name="Sato K."/>
            <person name="Tanikawa M."/>
            <person name="Yamazaki M."/>
            <person name="Ninomiya K."/>
            <person name="Ishibashi T."/>
            <person name="Yamashita H."/>
            <person name="Murakawa K."/>
            <person name="Fujimori K."/>
            <person name="Tanai H."/>
            <person name="Kimata M."/>
            <person name="Watanabe M."/>
            <person name="Hiraoka S."/>
            <person name="Chiba Y."/>
            <person name="Ishida S."/>
            <person name="Ono Y."/>
            <person name="Takiguchi S."/>
            <person name="Watanabe S."/>
            <person name="Yosida M."/>
            <person name="Hotuta T."/>
            <person name="Kusano J."/>
            <person name="Kanehori K."/>
            <person name="Takahashi-Fujii A."/>
            <person name="Hara H."/>
            <person name="Tanase T.-O."/>
            <person name="Nomura Y."/>
            <person name="Togiya S."/>
            <person name="Komai F."/>
            <person name="Hara R."/>
            <person name="Takeuchi K."/>
            <person name="Arita M."/>
            <person name="Imose N."/>
            <person name="Musashino K."/>
            <person name="Yuuki H."/>
            <person name="Oshima A."/>
            <person name="Sasaki N."/>
            <person name="Aotsuka S."/>
            <person name="Yoshikawa Y."/>
            <person name="Matsunawa H."/>
            <person name="Ichihara T."/>
            <person name="Shiohata N."/>
            <person name="Sano S."/>
            <person name="Moriya S."/>
            <person name="Momiyama H."/>
            <person name="Satoh N."/>
            <person name="Takami S."/>
            <person name="Terashima Y."/>
            <person name="Suzuki O."/>
            <person name="Nakagawa S."/>
            <person name="Senoh A."/>
            <person name="Mizoguchi H."/>
            <person name="Goto Y."/>
            <person name="Shimizu F."/>
            <person name="Wakebe H."/>
            <person name="Hishigaki H."/>
            <person name="Watanabe T."/>
            <person name="Sugiyama A."/>
            <person name="Takemoto M."/>
            <person name="Kawakami B."/>
            <person name="Yamazaki M."/>
            <person name="Watanabe K."/>
            <person name="Kumagai A."/>
            <person name="Itakura S."/>
            <person name="Fukuzumi Y."/>
            <person name="Fujimori Y."/>
            <person name="Komiyama M."/>
            <person name="Tashiro H."/>
            <person name="Tanigami A."/>
            <person name="Fujiwara T."/>
            <person name="Ono T."/>
            <person name="Yamada K."/>
            <person name="Fujii Y."/>
            <person name="Ozaki K."/>
            <person name="Hirao M."/>
            <person name="Ohmori Y."/>
            <person name="Kawabata A."/>
            <person name="Hikiji T."/>
            <person name="Kobatake N."/>
            <person name="Inagaki H."/>
            <person name="Ikema Y."/>
            <person name="Okamoto S."/>
            <person name="Okitani R."/>
            <person name="Kawakami T."/>
            <person name="Noguchi S."/>
            <person name="Itoh T."/>
            <person name="Shigeta K."/>
            <person name="Senba T."/>
            <person name="Matsumura K."/>
            <person name="Nakajima Y."/>
            <person name="Mizuno T."/>
            <person name="Morinaga M."/>
            <person name="Sasaki M."/>
            <person name="Togashi T."/>
            <person name="Oyama M."/>
            <person name="Hata H."/>
            <person name="Watanabe M."/>
            <person name="Komatsu T."/>
            <person name="Mizushima-Sugano J."/>
            <person name="Satoh T."/>
            <person name="Shirai Y."/>
            <person name="Takahashi Y."/>
            <person name="Nakagawa K."/>
            <person name="Okumura K."/>
            <person name="Nagase T."/>
            <person name="Nomura N."/>
            <person name="Kikuchi H."/>
            <person name="Masuho Y."/>
            <person name="Yamashita R."/>
            <person name="Nakai K."/>
            <person name="Yada T."/>
            <person name="Nakamura Y."/>
            <person name="Ohara O."/>
            <person name="Isogai T."/>
            <person name="Sugano S."/>
        </authorList>
    </citation>
    <scope>NUCLEOTIDE SEQUENCE [LARGE SCALE MRNA] (ISOFORMS 1; 2; 5 AND 6)</scope>
    <scope>NUCLEOTIDE SEQUENCE [LARGE SCALE MRNA] OF 1-167 (ISOFORM 4)</scope>
    <scope>VARIANT MET-32</scope>
    <source>
        <tissue>Brain</tissue>
        <tissue>Placenta</tissue>
        <tissue>Salivary gland</tissue>
        <tissue>Trachea</tissue>
    </source>
</reference>
<reference key="4">
    <citation type="journal article" date="2006" name="Nature">
        <title>The DNA sequence, annotation and analysis of human chromosome 3.</title>
        <authorList>
            <person name="Muzny D.M."/>
            <person name="Scherer S.E."/>
            <person name="Kaul R."/>
            <person name="Wang J."/>
            <person name="Yu J."/>
            <person name="Sudbrak R."/>
            <person name="Buhay C.J."/>
            <person name="Chen R."/>
            <person name="Cree A."/>
            <person name="Ding Y."/>
            <person name="Dugan-Rocha S."/>
            <person name="Gill R."/>
            <person name="Gunaratne P."/>
            <person name="Harris R.A."/>
            <person name="Hawes A.C."/>
            <person name="Hernandez J."/>
            <person name="Hodgson A.V."/>
            <person name="Hume J."/>
            <person name="Jackson A."/>
            <person name="Khan Z.M."/>
            <person name="Kovar-Smith C."/>
            <person name="Lewis L.R."/>
            <person name="Lozado R.J."/>
            <person name="Metzker M.L."/>
            <person name="Milosavljevic A."/>
            <person name="Miner G.R."/>
            <person name="Morgan M.B."/>
            <person name="Nazareth L.V."/>
            <person name="Scott G."/>
            <person name="Sodergren E."/>
            <person name="Song X.-Z."/>
            <person name="Steffen D."/>
            <person name="Wei S."/>
            <person name="Wheeler D.A."/>
            <person name="Wright M.W."/>
            <person name="Worley K.C."/>
            <person name="Yuan Y."/>
            <person name="Zhang Z."/>
            <person name="Adams C.Q."/>
            <person name="Ansari-Lari M.A."/>
            <person name="Ayele M."/>
            <person name="Brown M.J."/>
            <person name="Chen G."/>
            <person name="Chen Z."/>
            <person name="Clendenning J."/>
            <person name="Clerc-Blankenburg K.P."/>
            <person name="Chen R."/>
            <person name="Chen Z."/>
            <person name="Davis C."/>
            <person name="Delgado O."/>
            <person name="Dinh H.H."/>
            <person name="Dong W."/>
            <person name="Draper H."/>
            <person name="Ernst S."/>
            <person name="Fu G."/>
            <person name="Gonzalez-Garay M.L."/>
            <person name="Garcia D.K."/>
            <person name="Gillett W."/>
            <person name="Gu J."/>
            <person name="Hao B."/>
            <person name="Haugen E."/>
            <person name="Havlak P."/>
            <person name="He X."/>
            <person name="Hennig S."/>
            <person name="Hu S."/>
            <person name="Huang W."/>
            <person name="Jackson L.R."/>
            <person name="Jacob L.S."/>
            <person name="Kelly S.H."/>
            <person name="Kube M."/>
            <person name="Levy R."/>
            <person name="Li Z."/>
            <person name="Liu B."/>
            <person name="Liu J."/>
            <person name="Liu W."/>
            <person name="Lu J."/>
            <person name="Maheshwari M."/>
            <person name="Nguyen B.-V."/>
            <person name="Okwuonu G.O."/>
            <person name="Palmeiri A."/>
            <person name="Pasternak S."/>
            <person name="Perez L.M."/>
            <person name="Phelps K.A."/>
            <person name="Plopper F.J."/>
            <person name="Qiang B."/>
            <person name="Raymond C."/>
            <person name="Rodriguez R."/>
            <person name="Saenphimmachak C."/>
            <person name="Santibanez J."/>
            <person name="Shen H."/>
            <person name="Shen Y."/>
            <person name="Subramanian S."/>
            <person name="Tabor P.E."/>
            <person name="Verduzco D."/>
            <person name="Waldron L."/>
            <person name="Wang J."/>
            <person name="Wang J."/>
            <person name="Wang Q."/>
            <person name="Williams G.A."/>
            <person name="Wong G.K.-S."/>
            <person name="Yao Z."/>
            <person name="Zhang J."/>
            <person name="Zhang X."/>
            <person name="Zhao G."/>
            <person name="Zhou J."/>
            <person name="Zhou Y."/>
            <person name="Nelson D."/>
            <person name="Lehrach H."/>
            <person name="Reinhardt R."/>
            <person name="Naylor S.L."/>
            <person name="Yang H."/>
            <person name="Olson M."/>
            <person name="Weinstock G."/>
            <person name="Gibbs R.A."/>
        </authorList>
    </citation>
    <scope>NUCLEOTIDE SEQUENCE [LARGE SCALE GENOMIC DNA]</scope>
</reference>
<reference key="5">
    <citation type="submission" date="2005-07" db="EMBL/GenBank/DDBJ databases">
        <authorList>
            <person name="Mural R.J."/>
            <person name="Istrail S."/>
            <person name="Sutton G."/>
            <person name="Florea L."/>
            <person name="Halpern A.L."/>
            <person name="Mobarry C.M."/>
            <person name="Lippert R."/>
            <person name="Walenz B."/>
            <person name="Shatkay H."/>
            <person name="Dew I."/>
            <person name="Miller J.R."/>
            <person name="Flanigan M.J."/>
            <person name="Edwards N.J."/>
            <person name="Bolanos R."/>
            <person name="Fasulo D."/>
            <person name="Halldorsson B.V."/>
            <person name="Hannenhalli S."/>
            <person name="Turner R."/>
            <person name="Yooseph S."/>
            <person name="Lu F."/>
            <person name="Nusskern D.R."/>
            <person name="Shue B.C."/>
            <person name="Zheng X.H."/>
            <person name="Zhong F."/>
            <person name="Delcher A.L."/>
            <person name="Huson D.H."/>
            <person name="Kravitz S.A."/>
            <person name="Mouchard L."/>
            <person name="Reinert K."/>
            <person name="Remington K.A."/>
            <person name="Clark A.G."/>
            <person name="Waterman M.S."/>
            <person name="Eichler E.E."/>
            <person name="Adams M.D."/>
            <person name="Hunkapiller M.W."/>
            <person name="Myers E.W."/>
            <person name="Venter J.C."/>
        </authorList>
    </citation>
    <scope>NUCLEOTIDE SEQUENCE [LARGE SCALE GENOMIC DNA]</scope>
</reference>
<reference key="6">
    <citation type="journal article" date="2004" name="Genome Res.">
        <title>The status, quality, and expansion of the NIH full-length cDNA project: the Mammalian Gene Collection (MGC).</title>
        <authorList>
            <consortium name="The MGC Project Team"/>
        </authorList>
    </citation>
    <scope>NUCLEOTIDE SEQUENCE [LARGE SCALE MRNA] (ISOFORMS 1 AND 3)</scope>
    <scope>VARIANT MET-32</scope>
    <source>
        <tissue>Lung</tissue>
    </source>
</reference>
<reference key="7">
    <citation type="journal article" date="2008" name="Proc. Natl. Acad. Sci. U.S.A.">
        <title>A quantitative atlas of mitotic phosphorylation.</title>
        <authorList>
            <person name="Dephoure N."/>
            <person name="Zhou C."/>
            <person name="Villen J."/>
            <person name="Beausoleil S.A."/>
            <person name="Bakalarski C.E."/>
            <person name="Elledge S.J."/>
            <person name="Gygi S.P."/>
        </authorList>
    </citation>
    <scope>PHOSPHORYLATION [LARGE SCALE ANALYSIS] AT SER-52; SER-149 AND THR-153</scope>
    <scope>IDENTIFICATION BY MASS SPECTROMETRY [LARGE SCALE ANALYSIS]</scope>
    <source>
        <tissue>Cervix carcinoma</tissue>
    </source>
</reference>
<reference key="8">
    <citation type="journal article" date="2009" name="Anal. Chem.">
        <title>Lys-N and trypsin cover complementary parts of the phosphoproteome in a refined SCX-based approach.</title>
        <authorList>
            <person name="Gauci S."/>
            <person name="Helbig A.O."/>
            <person name="Slijper M."/>
            <person name="Krijgsveld J."/>
            <person name="Heck A.J."/>
            <person name="Mohammed S."/>
        </authorList>
    </citation>
    <scope>IDENTIFICATION BY MASS SPECTROMETRY [LARGE SCALE ANALYSIS]</scope>
</reference>
<reference key="9">
    <citation type="journal article" date="2010" name="FASEB J.">
        <title>IRF2BP2 is a skeletal and cardiac muscle-enriched ischemia-inducible activator of VEGFA expression.</title>
        <authorList>
            <person name="Teng A.C."/>
            <person name="Kuraitis D."/>
            <person name="Deeke S.A."/>
            <person name="Ahmadi A."/>
            <person name="Dugan S.G."/>
            <person name="Cheng B.L."/>
            <person name="Crowson M.G."/>
            <person name="Burgon P.G."/>
            <person name="Suuronen E.J."/>
            <person name="Chen H.H."/>
            <person name="Stewart A.F."/>
        </authorList>
    </citation>
    <scope>INTERACTION WITH IRF2BP2</scope>
</reference>
<reference key="10">
    <citation type="journal article" date="2010" name="Sci. Signal.">
        <title>Quantitative phosphoproteomics reveals widespread full phosphorylation site occupancy during mitosis.</title>
        <authorList>
            <person name="Olsen J.V."/>
            <person name="Vermeulen M."/>
            <person name="Santamaria A."/>
            <person name="Kumar C."/>
            <person name="Miller M.L."/>
            <person name="Jensen L.J."/>
            <person name="Gnad F."/>
            <person name="Cox J."/>
            <person name="Jensen T.S."/>
            <person name="Nigg E.A."/>
            <person name="Brunak S."/>
            <person name="Mann M."/>
        </authorList>
    </citation>
    <scope>PHOSPHORYLATION [LARGE SCALE ANALYSIS] AT SER-149; THR-153 AND SER-274</scope>
    <scope>IDENTIFICATION BY MASS SPECTROMETRY [LARGE SCALE ANALYSIS]</scope>
    <source>
        <tissue>Cervix carcinoma</tissue>
    </source>
</reference>
<reference key="11">
    <citation type="journal article" date="2012" name="Proc. Natl. Acad. Sci. U.S.A.">
        <title>N-terminal acetylome analyses and functional insights of the N-terminal acetyltransferase NatB.</title>
        <authorList>
            <person name="Van Damme P."/>
            <person name="Lasa M."/>
            <person name="Polevoda B."/>
            <person name="Gazquez C."/>
            <person name="Elosegui-Artola A."/>
            <person name="Kim D.S."/>
            <person name="De Juan-Pardo E."/>
            <person name="Demeyer K."/>
            <person name="Hole K."/>
            <person name="Larrea E."/>
            <person name="Timmerman E."/>
            <person name="Prieto J."/>
            <person name="Arnesen T."/>
            <person name="Sherman F."/>
            <person name="Gevaert K."/>
            <person name="Aldabe R."/>
        </authorList>
    </citation>
    <scope>ACETYLATION [LARGE SCALE ANALYSIS] AT MET-1</scope>
    <scope>IDENTIFICATION BY MASS SPECTROMETRY [LARGE SCALE ANALYSIS]</scope>
</reference>
<reference key="12">
    <citation type="journal article" date="2013" name="J. Proteome Res.">
        <title>Toward a comprehensive characterization of a human cancer cell phosphoproteome.</title>
        <authorList>
            <person name="Zhou H."/>
            <person name="Di Palma S."/>
            <person name="Preisinger C."/>
            <person name="Peng M."/>
            <person name="Polat A.N."/>
            <person name="Heck A.J."/>
            <person name="Mohammed S."/>
        </authorList>
    </citation>
    <scope>PHOSPHORYLATION [LARGE SCALE ANALYSIS] AT SER-52; SER-149 AND SER-274</scope>
    <scope>IDENTIFICATION BY MASS SPECTROMETRY [LARGE SCALE ANALYSIS]</scope>
    <source>
        <tissue>Cervix carcinoma</tissue>
        <tissue>Erythroleukemia</tissue>
    </source>
</reference>
<gene>
    <name evidence="10" type="primary">VGLL4</name>
    <name type="synonym">KIAA0121</name>
</gene>
<feature type="chain" id="PRO_0000191351" description="Transcription cofactor vestigial-like protein 4">
    <location>
        <begin position="1"/>
        <end position="290"/>
    </location>
</feature>
<feature type="region of interest" description="Disordered" evidence="2">
    <location>
        <begin position="17"/>
        <end position="65"/>
    </location>
</feature>
<feature type="region of interest" description="Disordered" evidence="2">
    <location>
        <begin position="85"/>
        <end position="106"/>
    </location>
</feature>
<feature type="region of interest" description="Disordered" evidence="2">
    <location>
        <begin position="140"/>
        <end position="161"/>
    </location>
</feature>
<feature type="region of interest" description="Disordered" evidence="2">
    <location>
        <begin position="254"/>
        <end position="290"/>
    </location>
</feature>
<feature type="compositionally biased region" description="Basic and acidic residues" evidence="2">
    <location>
        <begin position="17"/>
        <end position="30"/>
    </location>
</feature>
<feature type="compositionally biased region" description="Basic and acidic residues" evidence="2">
    <location>
        <begin position="92"/>
        <end position="105"/>
    </location>
</feature>
<feature type="compositionally biased region" description="Polar residues" evidence="2">
    <location>
        <begin position="150"/>
        <end position="161"/>
    </location>
</feature>
<feature type="compositionally biased region" description="Low complexity" evidence="2">
    <location>
        <begin position="272"/>
        <end position="290"/>
    </location>
</feature>
<feature type="modified residue" description="N-acetylmethionine" evidence="13">
    <location>
        <position position="1"/>
    </location>
</feature>
<feature type="modified residue" description="Phosphoserine" evidence="11 14">
    <location>
        <position position="52"/>
    </location>
</feature>
<feature type="modified residue" description="Phosphoserine" evidence="11 12 14">
    <location>
        <position position="149"/>
    </location>
</feature>
<feature type="modified residue" description="Phosphothreonine" evidence="11 12">
    <location>
        <position position="153"/>
    </location>
</feature>
<feature type="modified residue" description="Phosphoserine" evidence="12 14">
    <location>
        <position position="274"/>
    </location>
</feature>
<feature type="splice variant" id="VSP_040210" description="In isoform 5." evidence="7">
    <location>
        <begin position="1"/>
        <end position="84"/>
    </location>
</feature>
<feature type="splice variant" id="VSP_040211" description="In isoform 6." evidence="7">
    <location>
        <begin position="1"/>
        <end position="80"/>
    </location>
</feature>
<feature type="splice variant" id="VSP_062401" description="In isoform 2.">
    <original>METPLDVLSRAASLVHADDEKREAALRGEPRI</original>
    <variation>M</variation>
    <location>
        <begin position="1"/>
        <end position="32"/>
    </location>
</feature>
<feature type="splice variant" id="VSP_040212" description="In isoform 4." evidence="7">
    <original>METPLDVLSRAASLVHADDEKR</original>
    <variation>MLFMKMDLLNYQYLDKMNNNIGILCYEG</variation>
    <location>
        <begin position="1"/>
        <end position="22"/>
    </location>
</feature>
<feature type="splice variant" id="VSP_040213" description="In isoform 3." evidence="8">
    <original>REAALRGEPRIQTLPVASAL</original>
    <variation>PSPGNLLEMQNRSPRCGTDD</variation>
    <location>
        <begin position="22"/>
        <end position="41"/>
    </location>
</feature>
<feature type="splice variant" id="VSP_040214" description="In isoform 3." evidence="8">
    <location>
        <begin position="42"/>
        <end position="290"/>
    </location>
</feature>
<feature type="splice variant" id="VSP_040215" description="In isoform 6." evidence="7">
    <original>FNPHL</original>
    <variation>MIKVR</variation>
    <location>
        <begin position="81"/>
        <end position="85"/>
    </location>
</feature>
<feature type="splice variant" id="VSP_040216" description="In isoform 5." evidence="7">
    <original>L</original>
    <variation>M</variation>
    <location>
        <position position="85"/>
    </location>
</feature>
<feature type="sequence variant" id="VAR_024689" description="In dbSNP:rs2276749." evidence="3 4 6">
    <original>I</original>
    <variation>M</variation>
    <location>
        <position position="32"/>
    </location>
</feature>
<dbReference type="EMBL" id="D50911">
    <property type="protein sequence ID" value="BAA09470.3"/>
    <property type="status" value="ALT_INIT"/>
    <property type="molecule type" value="mRNA"/>
</dbReference>
<dbReference type="EMBL" id="AK130542">
    <property type="protein sequence ID" value="BAC85375.1"/>
    <property type="molecule type" value="mRNA"/>
</dbReference>
<dbReference type="EMBL" id="AK300344">
    <property type="protein sequence ID" value="BAG62089.1"/>
    <property type="molecule type" value="mRNA"/>
</dbReference>
<dbReference type="EMBL" id="AK307708">
    <property type="status" value="NOT_ANNOTATED_CDS"/>
    <property type="molecule type" value="mRNA"/>
</dbReference>
<dbReference type="EMBL" id="AK308761">
    <property type="status" value="NOT_ANNOTATED_CDS"/>
    <property type="molecule type" value="mRNA"/>
</dbReference>
<dbReference type="EMBL" id="DA770257">
    <property type="status" value="NOT_ANNOTATED_CDS"/>
    <property type="molecule type" value="mRNA"/>
</dbReference>
<dbReference type="EMBL" id="AC022001">
    <property type="status" value="NOT_ANNOTATED_CDS"/>
    <property type="molecule type" value="Genomic_DNA"/>
</dbReference>
<dbReference type="EMBL" id="AC090939">
    <property type="status" value="NOT_ANNOTATED_CDS"/>
    <property type="molecule type" value="Genomic_DNA"/>
</dbReference>
<dbReference type="EMBL" id="KF457586">
    <property type="status" value="NOT_ANNOTATED_CDS"/>
    <property type="molecule type" value="Genomic_DNA"/>
</dbReference>
<dbReference type="EMBL" id="KF457588">
    <property type="status" value="NOT_ANNOTATED_CDS"/>
    <property type="molecule type" value="Genomic_DNA"/>
</dbReference>
<dbReference type="EMBL" id="CH471055">
    <property type="protein sequence ID" value="EAW64103.1"/>
    <property type="molecule type" value="Genomic_DNA"/>
</dbReference>
<dbReference type="EMBL" id="CH471055">
    <property type="protein sequence ID" value="EAW64104.1"/>
    <property type="molecule type" value="Genomic_DNA"/>
</dbReference>
<dbReference type="EMBL" id="BC001514">
    <property type="protein sequence ID" value="AAH01514.2"/>
    <property type="molecule type" value="mRNA"/>
</dbReference>
<dbReference type="EMBL" id="BC003038">
    <property type="protein sequence ID" value="AAH03038.1"/>
    <property type="status" value="ALT_SEQ"/>
    <property type="molecule type" value="mRNA"/>
</dbReference>
<dbReference type="CCDS" id="CCDS2606.1">
    <molecule id="Q14135-1"/>
</dbReference>
<dbReference type="CCDS" id="CCDS46754.1">
    <molecule id="Q14135-4"/>
</dbReference>
<dbReference type="CCDS" id="CCDS46755.1">
    <molecule id="Q14135-6"/>
</dbReference>
<dbReference type="CCDS" id="CCDS46756.1">
    <molecule id="Q14135-5"/>
</dbReference>
<dbReference type="RefSeq" id="NP_001121691.1">
    <molecule id="Q14135-4"/>
    <property type="nucleotide sequence ID" value="NM_001128219.3"/>
</dbReference>
<dbReference type="RefSeq" id="NP_001121692.1">
    <molecule id="Q14135-6"/>
    <property type="nucleotide sequence ID" value="NM_001128220.3"/>
</dbReference>
<dbReference type="RefSeq" id="NP_001121693.1">
    <molecule id="Q14135-5"/>
    <property type="nucleotide sequence ID" value="NM_001128221.3"/>
</dbReference>
<dbReference type="RefSeq" id="NP_001271319.1">
    <property type="nucleotide sequence ID" value="NM_001284390.1"/>
</dbReference>
<dbReference type="RefSeq" id="NP_001271320.1">
    <property type="nucleotide sequence ID" value="NM_001284391.1"/>
</dbReference>
<dbReference type="RefSeq" id="NP_055482.2">
    <molecule id="Q14135-1"/>
    <property type="nucleotide sequence ID" value="NM_014667.4"/>
</dbReference>
<dbReference type="RefSeq" id="XP_024309603.1">
    <molecule id="Q14135-1"/>
    <property type="nucleotide sequence ID" value="XM_024453835.2"/>
</dbReference>
<dbReference type="RefSeq" id="XP_024309604.1">
    <molecule id="Q14135-1"/>
    <property type="nucleotide sequence ID" value="XM_024453836.2"/>
</dbReference>
<dbReference type="RefSeq" id="XP_054204478.1">
    <molecule id="Q14135-2"/>
    <property type="nucleotide sequence ID" value="XM_054348503.1"/>
</dbReference>
<dbReference type="RefSeq" id="XP_054204482.1">
    <molecule id="Q14135-2"/>
    <property type="nucleotide sequence ID" value="XM_054348507.1"/>
</dbReference>
<dbReference type="PDB" id="8YTF">
    <property type="method" value="X-ray"/>
    <property type="resolution" value="1.59 A"/>
    <property type="chains" value="B=161-168"/>
</dbReference>
<dbReference type="PDBsum" id="8YTF"/>
<dbReference type="SMR" id="Q14135"/>
<dbReference type="BioGRID" id="115039">
    <property type="interactions" value="26"/>
</dbReference>
<dbReference type="CORUM" id="Q14135"/>
<dbReference type="FunCoup" id="Q14135">
    <property type="interactions" value="1816"/>
</dbReference>
<dbReference type="IntAct" id="Q14135">
    <property type="interactions" value="18"/>
</dbReference>
<dbReference type="STRING" id="9606.ENSP00000404251"/>
<dbReference type="GlyGen" id="Q14135">
    <property type="glycosylation" value="2 sites, 1 O-linked glycan (1 site)"/>
</dbReference>
<dbReference type="iPTMnet" id="Q14135"/>
<dbReference type="PhosphoSitePlus" id="Q14135"/>
<dbReference type="BioMuta" id="VGLL4"/>
<dbReference type="DMDM" id="68068037"/>
<dbReference type="jPOST" id="Q14135"/>
<dbReference type="MassIVE" id="Q14135"/>
<dbReference type="PaxDb" id="9606-ENSP00000404251"/>
<dbReference type="PeptideAtlas" id="Q14135"/>
<dbReference type="ProteomicsDB" id="33986"/>
<dbReference type="ProteomicsDB" id="59833">
    <molecule id="Q14135-1"/>
</dbReference>
<dbReference type="ProteomicsDB" id="59834">
    <molecule id="Q14135-2"/>
</dbReference>
<dbReference type="ProteomicsDB" id="59835">
    <molecule id="Q14135-3"/>
</dbReference>
<dbReference type="ProteomicsDB" id="59836">
    <molecule id="Q14135-4"/>
</dbReference>
<dbReference type="ProteomicsDB" id="59837">
    <molecule id="Q14135-5"/>
</dbReference>
<dbReference type="ProteomicsDB" id="59838">
    <molecule id="Q14135-6"/>
</dbReference>
<dbReference type="Pumba" id="Q14135"/>
<dbReference type="Antibodypedia" id="26100">
    <property type="antibodies" value="159 antibodies from 24 providers"/>
</dbReference>
<dbReference type="DNASU" id="9686"/>
<dbReference type="Ensembl" id="ENST00000273038.7">
    <molecule id="Q14135-1"/>
    <property type="protein sequence ID" value="ENSP00000273038.3"/>
    <property type="gene ID" value="ENSG00000144560.16"/>
</dbReference>
<dbReference type="Ensembl" id="ENST00000424529.6">
    <molecule id="Q14135-5"/>
    <property type="protein sequence ID" value="ENSP00000402878.2"/>
    <property type="gene ID" value="ENSG00000144560.16"/>
</dbReference>
<dbReference type="Ensembl" id="ENST00000430365.7">
    <molecule id="Q14135-4"/>
    <property type="protein sequence ID" value="ENSP00000404251.2"/>
    <property type="gene ID" value="ENSG00000144560.16"/>
</dbReference>
<dbReference type="Ensembl" id="ENST00000451674.6">
    <molecule id="Q14135-6"/>
    <property type="protein sequence ID" value="ENSP00000416615.2"/>
    <property type="gene ID" value="ENSG00000144560.16"/>
</dbReference>
<dbReference type="GeneID" id="9686"/>
<dbReference type="KEGG" id="hsa:9686"/>
<dbReference type="MANE-Select" id="ENST00000430365.7">
    <molecule id="Q14135-4"/>
    <property type="protein sequence ID" value="ENSP00000404251.2"/>
    <property type="RefSeq nucleotide sequence ID" value="NM_001128219.3"/>
    <property type="RefSeq protein sequence ID" value="NP_001121691.1"/>
</dbReference>
<dbReference type="UCSC" id="uc010hdv.3">
    <molecule id="Q14135-1"/>
    <property type="organism name" value="human"/>
</dbReference>
<dbReference type="AGR" id="HGNC:28966"/>
<dbReference type="CTD" id="9686"/>
<dbReference type="DisGeNET" id="9686"/>
<dbReference type="GeneCards" id="VGLL4"/>
<dbReference type="HGNC" id="HGNC:28966">
    <property type="gene designation" value="VGLL4"/>
</dbReference>
<dbReference type="HPA" id="ENSG00000144560">
    <property type="expression patterns" value="Low tissue specificity"/>
</dbReference>
<dbReference type="MIM" id="618692">
    <property type="type" value="gene"/>
</dbReference>
<dbReference type="neXtProt" id="NX_Q14135"/>
<dbReference type="OpenTargets" id="ENSG00000144560"/>
<dbReference type="PharmGKB" id="PA128394553"/>
<dbReference type="VEuPathDB" id="HostDB:ENSG00000144560"/>
<dbReference type="eggNOG" id="ENOG502QTV3">
    <property type="taxonomic scope" value="Eukaryota"/>
</dbReference>
<dbReference type="GeneTree" id="ENSGT00390000003282"/>
<dbReference type="HOGENOM" id="CLU_085402_0_0_1"/>
<dbReference type="InParanoid" id="Q14135"/>
<dbReference type="OMA" id="CPIAHSS"/>
<dbReference type="OrthoDB" id="10040691at2759"/>
<dbReference type="PAN-GO" id="Q14135">
    <property type="GO annotations" value="2 GO annotations based on evolutionary models"/>
</dbReference>
<dbReference type="PhylomeDB" id="Q14135"/>
<dbReference type="TreeFam" id="TF330846"/>
<dbReference type="PathwayCommons" id="Q14135"/>
<dbReference type="SignaLink" id="Q14135"/>
<dbReference type="BioGRID-ORCS" id="9686">
    <property type="hits" value="21 hits in 1161 CRISPR screens"/>
</dbReference>
<dbReference type="ChiTaRS" id="VGLL4">
    <property type="organism name" value="human"/>
</dbReference>
<dbReference type="GenomeRNAi" id="9686"/>
<dbReference type="Pharos" id="Q14135">
    <property type="development level" value="Tbio"/>
</dbReference>
<dbReference type="PRO" id="PR:Q14135"/>
<dbReference type="Proteomes" id="UP000005640">
    <property type="component" value="Chromosome 3"/>
</dbReference>
<dbReference type="RNAct" id="Q14135">
    <property type="molecule type" value="protein"/>
</dbReference>
<dbReference type="Bgee" id="ENSG00000144560">
    <property type="expression patterns" value="Expressed in tibia and 217 other cell types or tissues"/>
</dbReference>
<dbReference type="ExpressionAtlas" id="Q14135">
    <property type="expression patterns" value="baseline and differential"/>
</dbReference>
<dbReference type="GO" id="GO:0005634">
    <property type="term" value="C:nucleus"/>
    <property type="evidence" value="ECO:0000250"/>
    <property type="project" value="UniProtKB"/>
</dbReference>
<dbReference type="GO" id="GO:0001223">
    <property type="term" value="F:transcription coactivator binding"/>
    <property type="evidence" value="ECO:0000318"/>
    <property type="project" value="GO_Central"/>
</dbReference>
<dbReference type="GO" id="GO:0060044">
    <property type="term" value="P:negative regulation of cardiac muscle cell proliferation"/>
    <property type="evidence" value="ECO:0000250"/>
    <property type="project" value="UniProtKB"/>
</dbReference>
<dbReference type="GO" id="GO:0030308">
    <property type="term" value="P:negative regulation of cell growth"/>
    <property type="evidence" value="ECO:0000314"/>
    <property type="project" value="UniProtKB"/>
</dbReference>
<dbReference type="GO" id="GO:0045892">
    <property type="term" value="P:negative regulation of DNA-templated transcription"/>
    <property type="evidence" value="ECO:0000250"/>
    <property type="project" value="UniProtKB"/>
</dbReference>
<dbReference type="GO" id="GO:0035331">
    <property type="term" value="P:negative regulation of hippo signaling"/>
    <property type="evidence" value="ECO:0000314"/>
    <property type="project" value="UniProtKB"/>
</dbReference>
<dbReference type="GO" id="GO:0030178">
    <property type="term" value="P:negative regulation of Wnt signaling pathway"/>
    <property type="evidence" value="ECO:0000314"/>
    <property type="project" value="UniProtKB"/>
</dbReference>
<dbReference type="GO" id="GO:0045732">
    <property type="term" value="P:positive regulation of protein catabolic process"/>
    <property type="evidence" value="ECO:0000250"/>
    <property type="project" value="UniProtKB"/>
</dbReference>
<dbReference type="InterPro" id="IPR006627">
    <property type="entry name" value="TDU_repeat"/>
</dbReference>
<dbReference type="InterPro" id="IPR028184">
    <property type="entry name" value="VGLL4"/>
</dbReference>
<dbReference type="PANTHER" id="PTHR17604">
    <property type="entry name" value="TRANSCRIPTION COFACTOR VESTIGIAL-LIKE PROTEIN 4"/>
    <property type="match status" value="1"/>
</dbReference>
<dbReference type="PANTHER" id="PTHR17604:SF1">
    <property type="entry name" value="TRANSCRIPTION COFACTOR VESTIGIAL-LIKE PROTEIN 4"/>
    <property type="match status" value="1"/>
</dbReference>
<dbReference type="Pfam" id="PF15245">
    <property type="entry name" value="VGLL4"/>
    <property type="match status" value="1"/>
</dbReference>
<dbReference type="SMART" id="SM00711">
    <property type="entry name" value="TDU"/>
    <property type="match status" value="2"/>
</dbReference>
<protein>
    <recommendedName>
        <fullName evidence="10">Transcription cofactor vestigial-like protein 4</fullName>
        <shortName>Vgl-4</shortName>
    </recommendedName>
</protein>
<keyword id="KW-0002">3D-structure</keyword>
<keyword id="KW-0007">Acetylation</keyword>
<keyword id="KW-0025">Alternative splicing</keyword>
<keyword id="KW-0539">Nucleus</keyword>
<keyword id="KW-0597">Phosphoprotein</keyword>
<keyword id="KW-1267">Proteomics identification</keyword>
<keyword id="KW-1185">Reference proteome</keyword>
<keyword id="KW-0804">Transcription</keyword>
<keyword id="KW-0805">Transcription regulation</keyword>
<comment type="function">
    <text evidence="1">May act as a specific coactivator for the mammalian TEFs.</text>
</comment>
<comment type="subunit">
    <text evidence="1 5">Interacts with TEFs (By similarity). Interacts with IRF2BP2.</text>
</comment>
<comment type="interaction">
    <interactant intactId="EBI-5278589">
        <id>Q14135</id>
    </interactant>
    <interactant intactId="EBI-9370956">
        <id>Q15562-2</id>
        <label>TEAD2</label>
    </interactant>
    <organismsDiffer>false</organismsDiffer>
    <experiments>3</experiments>
</comment>
<comment type="interaction">
    <interactant intactId="EBI-5278589">
        <id>Q14135</id>
    </interactant>
    <interactant intactId="EBI-746720">
        <id>Q99594</id>
        <label>TEAD3</label>
    </interactant>
    <organismsDiffer>false</organismsDiffer>
    <experiments>5</experiments>
</comment>
<comment type="interaction">
    <interactant intactId="EBI-5278589">
        <id>Q14135</id>
    </interactant>
    <interactant intactId="EBI-747736">
        <id>Q15561</id>
        <label>TEAD4</label>
    </interactant>
    <organismsDiffer>false</organismsDiffer>
    <experiments>4</experiments>
</comment>
<comment type="interaction">
    <interactant intactId="EBI-5278589">
        <id>Q14135</id>
    </interactant>
    <interactant intactId="EBI-750109">
        <id>Q9NYB0</id>
        <label>TERF2IP</label>
    </interactant>
    <organismsDiffer>false</organismsDiffer>
    <experiments>2</experiments>
</comment>
<comment type="subcellular location">
    <subcellularLocation>
        <location evidence="1">Nucleus</location>
    </subcellularLocation>
</comment>
<comment type="alternative products">
    <event type="alternative splicing"/>
    <isoform>
        <id>Q14135-1</id>
        <name>1</name>
        <sequence type="displayed"/>
    </isoform>
    <isoform>
        <id>Q14135-2</id>
        <name>2</name>
        <sequence type="described" ref="VSP_062401"/>
    </isoform>
    <isoform>
        <id>Q14135-3</id>
        <name>3</name>
        <sequence type="described" ref="VSP_040213 VSP_040214"/>
    </isoform>
    <isoform>
        <id>Q14135-4</id>
        <name>4</name>
        <sequence type="described" ref="VSP_040212"/>
    </isoform>
    <isoform>
        <id>Q14135-5</id>
        <name>5</name>
        <sequence type="described" ref="VSP_040210 VSP_040216"/>
    </isoform>
    <isoform>
        <id>Q14135-6</id>
        <name>6</name>
        <sequence type="described" ref="VSP_040211 VSP_040215"/>
    </isoform>
</comment>
<comment type="miscellaneous">
    <molecule>Isoform 3</molecule>
    <text evidence="9">Probable target of nonsense-mediated mRNA decay.</text>
</comment>
<comment type="similarity">
    <text evidence="9">Belongs to the vestigial family.</text>
</comment>
<comment type="sequence caution" evidence="9">
    <conflict type="erroneous translation">
        <sequence resource="EMBL-CDS" id="AAH03038"/>
    </conflict>
    <text>Wrong choice of CDS.</text>
</comment>
<comment type="sequence caution" evidence="9">
    <conflict type="erroneous initiation">
        <sequence resource="EMBL-CDS" id="BAA09470"/>
    </conflict>
    <text>Extended N-terminus.</text>
</comment>
<evidence type="ECO:0000250" key="1"/>
<evidence type="ECO:0000256" key="2">
    <source>
        <dbReference type="SAM" id="MobiDB-lite"/>
    </source>
</evidence>
<evidence type="ECO:0000269" key="3">
    <source>
    </source>
</evidence>
<evidence type="ECO:0000269" key="4">
    <source>
    </source>
</evidence>
<evidence type="ECO:0000269" key="5">
    <source>
    </source>
</evidence>
<evidence type="ECO:0000269" key="6">
    <source>
    </source>
</evidence>
<evidence type="ECO:0000303" key="7">
    <source>
    </source>
</evidence>
<evidence type="ECO:0000303" key="8">
    <source>
    </source>
</evidence>
<evidence type="ECO:0000305" key="9"/>
<evidence type="ECO:0000312" key="10">
    <source>
        <dbReference type="HGNC" id="HGNC:28966"/>
    </source>
</evidence>
<evidence type="ECO:0007744" key="11">
    <source>
    </source>
</evidence>
<evidence type="ECO:0007744" key="12">
    <source>
    </source>
</evidence>
<evidence type="ECO:0007744" key="13">
    <source>
    </source>
</evidence>
<evidence type="ECO:0007744" key="14">
    <source>
    </source>
</evidence>
<name>VGLL4_HUMAN</name>